<dbReference type="EC" id="2.7.7.60" evidence="1"/>
<dbReference type="EC" id="4.6.1.12" evidence="1"/>
<dbReference type="EMBL" id="CP000628">
    <property type="protein sequence ID" value="ACM26492.1"/>
    <property type="molecule type" value="Genomic_DNA"/>
</dbReference>
<dbReference type="RefSeq" id="WP_012651378.1">
    <property type="nucleotide sequence ID" value="NC_011985.1"/>
</dbReference>
<dbReference type="SMR" id="B9JF01"/>
<dbReference type="STRING" id="311403.Arad_2262"/>
<dbReference type="KEGG" id="ara:Arad_2262"/>
<dbReference type="eggNOG" id="COG0245">
    <property type="taxonomic scope" value="Bacteria"/>
</dbReference>
<dbReference type="eggNOG" id="COG1211">
    <property type="taxonomic scope" value="Bacteria"/>
</dbReference>
<dbReference type="HOGENOM" id="CLU_042800_1_0_5"/>
<dbReference type="UniPathway" id="UPA00056">
    <property type="reaction ID" value="UER00093"/>
</dbReference>
<dbReference type="UniPathway" id="UPA00056">
    <property type="reaction ID" value="UER00095"/>
</dbReference>
<dbReference type="Proteomes" id="UP000001600">
    <property type="component" value="Chromosome 1"/>
</dbReference>
<dbReference type="GO" id="GO:0008685">
    <property type="term" value="F:2-C-methyl-D-erythritol 2,4-cyclodiphosphate synthase activity"/>
    <property type="evidence" value="ECO:0007669"/>
    <property type="project" value="UniProtKB-UniRule"/>
</dbReference>
<dbReference type="GO" id="GO:0050518">
    <property type="term" value="F:2-C-methyl-D-erythritol 4-phosphate cytidylyltransferase activity"/>
    <property type="evidence" value="ECO:0007669"/>
    <property type="project" value="UniProtKB-UniRule"/>
</dbReference>
<dbReference type="GO" id="GO:0046872">
    <property type="term" value="F:metal ion binding"/>
    <property type="evidence" value="ECO:0007669"/>
    <property type="project" value="UniProtKB-KW"/>
</dbReference>
<dbReference type="GO" id="GO:0019288">
    <property type="term" value="P:isopentenyl diphosphate biosynthetic process, methylerythritol 4-phosphate pathway"/>
    <property type="evidence" value="ECO:0007669"/>
    <property type="project" value="UniProtKB-UniRule"/>
</dbReference>
<dbReference type="GO" id="GO:0016114">
    <property type="term" value="P:terpenoid biosynthetic process"/>
    <property type="evidence" value="ECO:0007669"/>
    <property type="project" value="InterPro"/>
</dbReference>
<dbReference type="CDD" id="cd02516">
    <property type="entry name" value="CDP-ME_synthetase"/>
    <property type="match status" value="1"/>
</dbReference>
<dbReference type="CDD" id="cd00554">
    <property type="entry name" value="MECDP_synthase"/>
    <property type="match status" value="1"/>
</dbReference>
<dbReference type="FunFam" id="3.90.550.10:FF:000003">
    <property type="entry name" value="2-C-methyl-D-erythritol 4-phosphate cytidylyltransferase"/>
    <property type="match status" value="1"/>
</dbReference>
<dbReference type="Gene3D" id="3.30.1330.50">
    <property type="entry name" value="2-C-methyl-D-erythritol 2,4-cyclodiphosphate synthase"/>
    <property type="match status" value="1"/>
</dbReference>
<dbReference type="Gene3D" id="3.90.550.10">
    <property type="entry name" value="Spore Coat Polysaccharide Biosynthesis Protein SpsA, Chain A"/>
    <property type="match status" value="1"/>
</dbReference>
<dbReference type="HAMAP" id="MF_00108">
    <property type="entry name" value="IspD"/>
    <property type="match status" value="1"/>
</dbReference>
<dbReference type="HAMAP" id="MF_01520">
    <property type="entry name" value="IspDF"/>
    <property type="match status" value="1"/>
</dbReference>
<dbReference type="HAMAP" id="MF_00107">
    <property type="entry name" value="IspF"/>
    <property type="match status" value="1"/>
</dbReference>
<dbReference type="InterPro" id="IPR001228">
    <property type="entry name" value="IspD"/>
</dbReference>
<dbReference type="InterPro" id="IPR026596">
    <property type="entry name" value="IspD/F"/>
</dbReference>
<dbReference type="InterPro" id="IPR034683">
    <property type="entry name" value="IspD/TarI"/>
</dbReference>
<dbReference type="InterPro" id="IPR018294">
    <property type="entry name" value="ISPD_synthase_CS"/>
</dbReference>
<dbReference type="InterPro" id="IPR003526">
    <property type="entry name" value="MECDP_synthase"/>
</dbReference>
<dbReference type="InterPro" id="IPR020555">
    <property type="entry name" value="MECDP_synthase_CS"/>
</dbReference>
<dbReference type="InterPro" id="IPR036571">
    <property type="entry name" value="MECDP_synthase_sf"/>
</dbReference>
<dbReference type="InterPro" id="IPR029044">
    <property type="entry name" value="Nucleotide-diphossugar_trans"/>
</dbReference>
<dbReference type="NCBIfam" id="TIGR00453">
    <property type="entry name" value="ispD"/>
    <property type="match status" value="1"/>
</dbReference>
<dbReference type="NCBIfam" id="TIGR00151">
    <property type="entry name" value="ispF"/>
    <property type="match status" value="1"/>
</dbReference>
<dbReference type="NCBIfam" id="NF006899">
    <property type="entry name" value="PRK09382.1"/>
    <property type="match status" value="1"/>
</dbReference>
<dbReference type="PANTHER" id="PTHR43181">
    <property type="entry name" value="2-C-METHYL-D-ERYTHRITOL 2,4-CYCLODIPHOSPHATE SYNTHASE, CHLOROPLASTIC"/>
    <property type="match status" value="1"/>
</dbReference>
<dbReference type="PANTHER" id="PTHR43181:SF1">
    <property type="entry name" value="2-C-METHYL-D-ERYTHRITOL 2,4-CYCLODIPHOSPHATE SYNTHASE, CHLOROPLASTIC"/>
    <property type="match status" value="1"/>
</dbReference>
<dbReference type="Pfam" id="PF01128">
    <property type="entry name" value="IspD"/>
    <property type="match status" value="1"/>
</dbReference>
<dbReference type="Pfam" id="PF02542">
    <property type="entry name" value="YgbB"/>
    <property type="match status" value="1"/>
</dbReference>
<dbReference type="SUPFAM" id="SSF69765">
    <property type="entry name" value="IpsF-like"/>
    <property type="match status" value="1"/>
</dbReference>
<dbReference type="SUPFAM" id="SSF53448">
    <property type="entry name" value="Nucleotide-diphospho-sugar transferases"/>
    <property type="match status" value="1"/>
</dbReference>
<dbReference type="PROSITE" id="PS01295">
    <property type="entry name" value="ISPD"/>
    <property type="match status" value="1"/>
</dbReference>
<dbReference type="PROSITE" id="PS01350">
    <property type="entry name" value="ISPF"/>
    <property type="match status" value="1"/>
</dbReference>
<gene>
    <name evidence="1" type="primary">ispDF</name>
    <name type="ordered locus">Arad_2262</name>
</gene>
<organism>
    <name type="scientific">Rhizobium rhizogenes (strain K84 / ATCC BAA-868)</name>
    <name type="common">Agrobacterium radiobacter</name>
    <dbReference type="NCBI Taxonomy" id="311403"/>
    <lineage>
        <taxon>Bacteria</taxon>
        <taxon>Pseudomonadati</taxon>
        <taxon>Pseudomonadota</taxon>
        <taxon>Alphaproteobacteria</taxon>
        <taxon>Hyphomicrobiales</taxon>
        <taxon>Rhizobiaceae</taxon>
        <taxon>Rhizobium/Agrobacterium group</taxon>
        <taxon>Rhizobium</taxon>
    </lineage>
</organism>
<accession>B9JF01</accession>
<evidence type="ECO:0000255" key="1">
    <source>
        <dbReference type="HAMAP-Rule" id="MF_01520"/>
    </source>
</evidence>
<keyword id="KW-0414">Isoprene biosynthesis</keyword>
<keyword id="KW-0456">Lyase</keyword>
<keyword id="KW-0479">Metal-binding</keyword>
<keyword id="KW-0511">Multifunctional enzyme</keyword>
<keyword id="KW-0548">Nucleotidyltransferase</keyword>
<keyword id="KW-0808">Transferase</keyword>
<proteinExistence type="inferred from homology"/>
<name>ISPDF_RHIR8</name>
<protein>
    <recommendedName>
        <fullName evidence="1">Bifunctional enzyme IspD/IspF</fullName>
    </recommendedName>
    <domain>
        <recommendedName>
            <fullName evidence="1">2-C-methyl-D-erythritol 4-phosphate cytidylyltransferase</fullName>
            <ecNumber evidence="1">2.7.7.60</ecNumber>
        </recommendedName>
        <alternativeName>
            <fullName evidence="1">4-diphosphocytidyl-2C-methyl-D-erythritol synthase</fullName>
        </alternativeName>
        <alternativeName>
            <fullName evidence="1">MEP cytidylyltransferase</fullName>
            <shortName evidence="1">MCT</shortName>
        </alternativeName>
    </domain>
    <domain>
        <recommendedName>
            <fullName evidence="1">2-C-methyl-D-erythritol 2,4-cyclodiphosphate synthase</fullName>
            <shortName evidence="1">MECDP-synthase</shortName>
            <shortName evidence="1">MECPP-synthase</shortName>
            <shortName evidence="1">MECPS</shortName>
            <ecNumber evidence="1">4.6.1.12</ecNumber>
        </recommendedName>
    </domain>
</protein>
<comment type="function">
    <text evidence="1">Bifunctional enzyme that catalyzes the formation of 4-diphosphocytidyl-2-C-methyl-D-erythritol from CTP and 2-C-methyl-D-erythritol 4-phosphate (MEP) (IspD), and catalyzes the conversion of 4-diphosphocytidyl-2-C-methyl-D-erythritol 2-phosphate (CDP-ME2P) to 2-C-methyl-D-erythritol 2,4-cyclodiphosphate (ME-CPP) with a corresponding release of cytidine 5-monophosphate (CMP) (IspF).</text>
</comment>
<comment type="catalytic activity">
    <reaction evidence="1">
        <text>2-C-methyl-D-erythritol 4-phosphate + CTP + H(+) = 4-CDP-2-C-methyl-D-erythritol + diphosphate</text>
        <dbReference type="Rhea" id="RHEA:13429"/>
        <dbReference type="ChEBI" id="CHEBI:15378"/>
        <dbReference type="ChEBI" id="CHEBI:33019"/>
        <dbReference type="ChEBI" id="CHEBI:37563"/>
        <dbReference type="ChEBI" id="CHEBI:57823"/>
        <dbReference type="ChEBI" id="CHEBI:58262"/>
        <dbReference type="EC" id="2.7.7.60"/>
    </reaction>
</comment>
<comment type="catalytic activity">
    <reaction evidence="1">
        <text>4-CDP-2-C-methyl-D-erythritol 2-phosphate = 2-C-methyl-D-erythritol 2,4-cyclic diphosphate + CMP</text>
        <dbReference type="Rhea" id="RHEA:23864"/>
        <dbReference type="ChEBI" id="CHEBI:57919"/>
        <dbReference type="ChEBI" id="CHEBI:58483"/>
        <dbReference type="ChEBI" id="CHEBI:60377"/>
        <dbReference type="EC" id="4.6.1.12"/>
    </reaction>
</comment>
<comment type="cofactor">
    <cofactor evidence="1">
        <name>a divalent metal cation</name>
        <dbReference type="ChEBI" id="CHEBI:60240"/>
    </cofactor>
</comment>
<comment type="pathway">
    <text evidence="1">Isoprenoid biosynthesis; isopentenyl diphosphate biosynthesis via DXP pathway; isopentenyl diphosphate from 1-deoxy-D-xylulose 5-phosphate: step 2/6.</text>
</comment>
<comment type="pathway">
    <text evidence="1">Isoprenoid biosynthesis; isopentenyl diphosphate biosynthesis via DXP pathway; isopentenyl diphosphate from 1-deoxy-D-xylulose 5-phosphate: step 4/6.</text>
</comment>
<comment type="similarity">
    <text evidence="1">In the N-terminal section; belongs to the IspD/TarI cytidylyltransferase family. IspD subfamily.</text>
</comment>
<comment type="similarity">
    <text evidence="1">In the C-terminal section; belongs to the IspF family.</text>
</comment>
<reference key="1">
    <citation type="journal article" date="2009" name="J. Bacteriol.">
        <title>Genome sequences of three Agrobacterium biovars help elucidate the evolution of multichromosome genomes in bacteria.</title>
        <authorList>
            <person name="Slater S.C."/>
            <person name="Goldman B.S."/>
            <person name="Goodner B."/>
            <person name="Setubal J.C."/>
            <person name="Farrand S.K."/>
            <person name="Nester E.W."/>
            <person name="Burr T.J."/>
            <person name="Banta L."/>
            <person name="Dickerman A.W."/>
            <person name="Paulsen I."/>
            <person name="Otten L."/>
            <person name="Suen G."/>
            <person name="Welch R."/>
            <person name="Almeida N.F."/>
            <person name="Arnold F."/>
            <person name="Burton O.T."/>
            <person name="Du Z."/>
            <person name="Ewing A."/>
            <person name="Godsy E."/>
            <person name="Heisel S."/>
            <person name="Houmiel K.L."/>
            <person name="Jhaveri J."/>
            <person name="Lu J."/>
            <person name="Miller N.M."/>
            <person name="Norton S."/>
            <person name="Chen Q."/>
            <person name="Phoolcharoen W."/>
            <person name="Ohlin V."/>
            <person name="Ondrusek D."/>
            <person name="Pride N."/>
            <person name="Stricklin S.L."/>
            <person name="Sun J."/>
            <person name="Wheeler C."/>
            <person name="Wilson L."/>
            <person name="Zhu H."/>
            <person name="Wood D.W."/>
        </authorList>
    </citation>
    <scope>NUCLEOTIDE SEQUENCE [LARGE SCALE GENOMIC DNA]</scope>
    <source>
        <strain>K84 / ATCC BAA-868</strain>
    </source>
</reference>
<feature type="chain" id="PRO_1000185096" description="Bifunctional enzyme IspD/IspF">
    <location>
        <begin position="1"/>
        <end position="406"/>
    </location>
</feature>
<feature type="region of interest" description="2-C-methyl-D-erythritol 4-phosphate cytidylyltransferase" evidence="1">
    <location>
        <begin position="1"/>
        <end position="246"/>
    </location>
</feature>
<feature type="region of interest" description="2-C-methyl-D-erythritol 2,4-cyclodiphosphate synthase" evidence="1">
    <location>
        <begin position="247"/>
        <end position="406"/>
    </location>
</feature>
<feature type="binding site" evidence="1">
    <location>
        <begin position="253"/>
        <end position="255"/>
    </location>
    <ligand>
        <name>4-CDP-2-C-methyl-D-erythritol 2-phosphate</name>
        <dbReference type="ChEBI" id="CHEBI:57919"/>
    </ligand>
</feature>
<feature type="binding site" evidence="1">
    <location>
        <position position="253"/>
    </location>
    <ligand>
        <name>a divalent metal cation</name>
        <dbReference type="ChEBI" id="CHEBI:60240"/>
    </ligand>
</feature>
<feature type="binding site" evidence="1">
    <location>
        <position position="255"/>
    </location>
    <ligand>
        <name>a divalent metal cation</name>
        <dbReference type="ChEBI" id="CHEBI:60240"/>
    </ligand>
</feature>
<feature type="binding site" evidence="1">
    <location>
        <begin position="279"/>
        <end position="280"/>
    </location>
    <ligand>
        <name>4-CDP-2-C-methyl-D-erythritol 2-phosphate</name>
        <dbReference type="ChEBI" id="CHEBI:57919"/>
    </ligand>
</feature>
<feature type="binding site" evidence="1">
    <location>
        <position position="287"/>
    </location>
    <ligand>
        <name>a divalent metal cation</name>
        <dbReference type="ChEBI" id="CHEBI:60240"/>
    </ligand>
</feature>
<feature type="binding site" evidence="1">
    <location>
        <begin position="301"/>
        <end position="303"/>
    </location>
    <ligand>
        <name>4-CDP-2-C-methyl-D-erythritol 2-phosphate</name>
        <dbReference type="ChEBI" id="CHEBI:57919"/>
    </ligand>
</feature>
<feature type="binding site" evidence="1">
    <location>
        <begin position="377"/>
        <end position="380"/>
    </location>
    <ligand>
        <name>4-CDP-2-C-methyl-D-erythritol 2-phosphate</name>
        <dbReference type="ChEBI" id="CHEBI:57919"/>
    </ligand>
</feature>
<feature type="binding site" evidence="1">
    <location>
        <position position="384"/>
    </location>
    <ligand>
        <name>4-CDP-2-C-methyl-D-erythritol 2-phosphate</name>
        <dbReference type="ChEBI" id="CHEBI:57919"/>
    </ligand>
</feature>
<feature type="binding site" evidence="1">
    <location>
        <position position="387"/>
    </location>
    <ligand>
        <name>4-CDP-2-C-methyl-D-erythritol 2-phosphate</name>
        <dbReference type="ChEBI" id="CHEBI:57919"/>
    </ligand>
</feature>
<feature type="site" description="Transition state stabilizer" evidence="1">
    <location>
        <position position="24"/>
    </location>
</feature>
<feature type="site" description="Transition state stabilizer" evidence="1">
    <location>
        <position position="33"/>
    </location>
</feature>
<feature type="site" description="Positions MEP for the nucleophilic attack" evidence="1">
    <location>
        <position position="167"/>
    </location>
</feature>
<feature type="site" description="Positions MEP for the nucleophilic attack" evidence="1">
    <location>
        <position position="224"/>
    </location>
</feature>
<feature type="site" description="Transition state stabilizer" evidence="1">
    <location>
        <position position="279"/>
    </location>
</feature>
<feature type="site" description="Transition state stabilizer" evidence="1">
    <location>
        <position position="378"/>
    </location>
</feature>
<sequence length="406" mass="43140">MTQMHSTQPMSIGIVIVAAGRGERAGSPEEGPKQYRAIGGRPVIAHTLEKFVTWPQTTKIVIVIHRDDEKLLRSAQETIVDSSGVEIAFGGTTRQQSVLAGVRQLEKTGVSHVMIHDAVRPFFDHDLLDRVAAALAAGAPAVLPAMPVTDTLKRADTDALVTETVPRAGLYAAQTPQSFRLADILAAHEKAAADNKTDFTDDAAIAEWAGLPVTLVAGSADNVKLTIKRDIAMADEKLSAGLLPDVRTGNGYDVHQLEPGDGVTLCGVFIPHDQTLKGHSDADVALHALTDALLATCGAGDIGDHFPPSDPQWRGAPSRIFIEHAARIVRDHGGTIMNADVSLIAEAPKVGPHREAMRAKLSEFLGISLERCSVKATTNEQIGFVGRREGIAAIATATVVYRGGRP</sequence>